<evidence type="ECO:0000250" key="1"/>
<evidence type="ECO:0000250" key="2">
    <source>
        <dbReference type="UniProtKB" id="O95551"/>
    </source>
</evidence>
<evidence type="ECO:0000250" key="3">
    <source>
        <dbReference type="UniProtKB" id="P31384"/>
    </source>
</evidence>
<evidence type="ECO:0000256" key="4">
    <source>
        <dbReference type="SAM" id="MobiDB-lite"/>
    </source>
</evidence>
<evidence type="ECO:0000305" key="5"/>
<accession>Q6CEJ6</accession>
<keyword id="KW-0010">Activator</keyword>
<keyword id="KW-0963">Cytoplasm</keyword>
<keyword id="KW-0269">Exonuclease</keyword>
<keyword id="KW-0378">Hydrolase</keyword>
<keyword id="KW-0433">Leucine-rich repeat</keyword>
<keyword id="KW-0460">Magnesium</keyword>
<keyword id="KW-0479">Metal-binding</keyword>
<keyword id="KW-0540">Nuclease</keyword>
<keyword id="KW-0539">Nucleus</keyword>
<keyword id="KW-1185">Reference proteome</keyword>
<keyword id="KW-0677">Repeat</keyword>
<keyword id="KW-0678">Repressor</keyword>
<keyword id="KW-0694">RNA-binding</keyword>
<keyword id="KW-0804">Transcription</keyword>
<keyword id="KW-0805">Transcription regulation</keyword>
<proteinExistence type="inferred from homology"/>
<organism>
    <name type="scientific">Yarrowia lipolytica (strain CLIB 122 / E 150)</name>
    <name type="common">Yeast</name>
    <name type="synonym">Candida lipolytica</name>
    <dbReference type="NCBI Taxonomy" id="284591"/>
    <lineage>
        <taxon>Eukaryota</taxon>
        <taxon>Fungi</taxon>
        <taxon>Dikarya</taxon>
        <taxon>Ascomycota</taxon>
        <taxon>Saccharomycotina</taxon>
        <taxon>Dipodascomycetes</taxon>
        <taxon>Dipodascales</taxon>
        <taxon>Dipodascales incertae sedis</taxon>
        <taxon>Yarrowia</taxon>
    </lineage>
</organism>
<gene>
    <name type="primary">CCR4</name>
    <name type="ordered locus">YALI0B15147g</name>
</gene>
<feature type="chain" id="PRO_0000290619" description="CCR4-Not complex 3'-5'-exoribonuclease subunit Ccr4">
    <location>
        <begin position="1"/>
        <end position="705"/>
    </location>
</feature>
<feature type="repeat" description="LRR 1">
    <location>
        <begin position="152"/>
        <end position="175"/>
    </location>
</feature>
<feature type="repeat" description="LRR 2">
    <location>
        <begin position="178"/>
        <end position="199"/>
    </location>
</feature>
<feature type="repeat" description="LRR 3">
    <location>
        <begin position="201"/>
        <end position="222"/>
    </location>
</feature>
<feature type="repeat" description="LRR 4">
    <location>
        <begin position="224"/>
        <end position="245"/>
    </location>
</feature>
<feature type="repeat" description="LRR 5">
    <location>
        <begin position="247"/>
        <end position="267"/>
    </location>
</feature>
<feature type="region of interest" description="Disordered" evidence="4">
    <location>
        <begin position="15"/>
        <end position="42"/>
    </location>
</feature>
<feature type="region of interest" description="Disordered" evidence="4">
    <location>
        <begin position="75"/>
        <end position="94"/>
    </location>
</feature>
<feature type="region of interest" description="Disordered" evidence="4">
    <location>
        <begin position="117"/>
        <end position="137"/>
    </location>
</feature>
<feature type="region of interest" description="Disordered" evidence="4">
    <location>
        <begin position="679"/>
        <end position="705"/>
    </location>
</feature>
<feature type="compositionally biased region" description="Gly residues" evidence="4">
    <location>
        <begin position="21"/>
        <end position="30"/>
    </location>
</feature>
<feature type="compositionally biased region" description="Basic and acidic residues" evidence="4">
    <location>
        <begin position="81"/>
        <end position="94"/>
    </location>
</feature>
<feature type="compositionally biased region" description="Polar residues" evidence="4">
    <location>
        <begin position="119"/>
        <end position="132"/>
    </location>
</feature>
<feature type="compositionally biased region" description="Polar residues" evidence="4">
    <location>
        <begin position="695"/>
        <end position="705"/>
    </location>
</feature>
<feature type="binding site" evidence="2">
    <location>
        <position position="392"/>
    </location>
    <ligand>
        <name>Mg(2+)</name>
        <dbReference type="ChEBI" id="CHEBI:18420"/>
    </ligand>
</feature>
<sequence length="705" mass="77553">MNHNTSFQQQLLQQLHQPGGSNPGGVGATGAGNNSPSYPEASLMGSKFWQKQMQLAQLSRQTGPTSHGYARAAAINSRQQHGRDGAQVDADKDQGPSQLTLVDLAVQTVQQDLVEQQQATAASTPQRGYTNQQKKDQLEEERQMTLMQQEKHQYWADLDMSGQGLMCLSPPLFRSYEFLLKLYINHNKLTTLPPAIRSLRQLRVLDVSSNMLTKLPPEIGMLHNLRYLFAFDNYLSTLPHQVGQLYQLEVIGLEGNPINQPIKEKLAQGGTKELVAELRESAPMPAAPKPREWIVLEEAGGRGGAATAAAATEGESGSTVATATAGANAAAAGASASSDTFTVMSYNTLCDKYTTVQMHGYTPLWALGWKHRSETLLKEVIGYDSDILCFQEVDGASFEDFWSPKLHQLGYAGLYHPKTRARTMSKEKDAKRVDGCAIFYKTKSFCLIEKLSLDFSSLALKNNDFKKTADTYNRVLNKDNIALIALLEHVTTGQKIIVTNTHLHWDPAFNDVKLIQVALLLDEVEKFAERVAKDSNRVSARNQDGNNVKYESGKKLPLVICGDFNSTTDSGVYSLFSQGTVTNHKDMSGRAYGKFTDEGMNHGFTLKSAYSNIGELAFTNYTPNFVDVIDYVWYSSNALSVRGLLGGIDPDYTSNMVGFPSVHYPSDHISLLAEFSFKKQKGGDGQPKKALDFGNSGSHSGSRKT</sequence>
<comment type="function">
    <text evidence="3">Acts as a catalytic component of the CCR4-NOT core complex, which in the nucleus seems to be a general transcription factor, and in the cytoplasm the major mRNA deadenylase involved in mRNA turnover (By similarity). Ccr4 has 3'-5' RNase activity with a strong preference for polyadenylated substrates and also low exonuclease activity towards single-stranded DNA (By similarity).</text>
</comment>
<comment type="catalytic activity">
    <reaction>
        <text>Exonucleolytic cleavage of poly(A) to 5'-AMP.</text>
        <dbReference type="EC" id="3.1.13.4"/>
    </reaction>
</comment>
<comment type="cofactor">
    <cofactor evidence="1">
        <name>Mg(2+)</name>
        <dbReference type="ChEBI" id="CHEBI:18420"/>
    </cofactor>
</comment>
<comment type="subcellular location">
    <subcellularLocation>
        <location evidence="1">Cytoplasm</location>
    </subcellularLocation>
    <subcellularLocation>
        <location evidence="1">Nucleus</location>
    </subcellularLocation>
</comment>
<comment type="similarity">
    <text evidence="5">Belongs to the CCR4/nocturin family.</text>
</comment>
<reference key="1">
    <citation type="journal article" date="2004" name="Nature">
        <title>Genome evolution in yeasts.</title>
        <authorList>
            <person name="Dujon B."/>
            <person name="Sherman D."/>
            <person name="Fischer G."/>
            <person name="Durrens P."/>
            <person name="Casaregola S."/>
            <person name="Lafontaine I."/>
            <person name="de Montigny J."/>
            <person name="Marck C."/>
            <person name="Neuveglise C."/>
            <person name="Talla E."/>
            <person name="Goffard N."/>
            <person name="Frangeul L."/>
            <person name="Aigle M."/>
            <person name="Anthouard V."/>
            <person name="Babour A."/>
            <person name="Barbe V."/>
            <person name="Barnay S."/>
            <person name="Blanchin S."/>
            <person name="Beckerich J.-M."/>
            <person name="Beyne E."/>
            <person name="Bleykasten C."/>
            <person name="Boisrame A."/>
            <person name="Boyer J."/>
            <person name="Cattolico L."/>
            <person name="Confanioleri F."/>
            <person name="de Daruvar A."/>
            <person name="Despons L."/>
            <person name="Fabre E."/>
            <person name="Fairhead C."/>
            <person name="Ferry-Dumazet H."/>
            <person name="Groppi A."/>
            <person name="Hantraye F."/>
            <person name="Hennequin C."/>
            <person name="Jauniaux N."/>
            <person name="Joyet P."/>
            <person name="Kachouri R."/>
            <person name="Kerrest A."/>
            <person name="Koszul R."/>
            <person name="Lemaire M."/>
            <person name="Lesur I."/>
            <person name="Ma L."/>
            <person name="Muller H."/>
            <person name="Nicaud J.-M."/>
            <person name="Nikolski M."/>
            <person name="Oztas S."/>
            <person name="Ozier-Kalogeropoulos O."/>
            <person name="Pellenz S."/>
            <person name="Potier S."/>
            <person name="Richard G.-F."/>
            <person name="Straub M.-L."/>
            <person name="Suleau A."/>
            <person name="Swennen D."/>
            <person name="Tekaia F."/>
            <person name="Wesolowski-Louvel M."/>
            <person name="Westhof E."/>
            <person name="Wirth B."/>
            <person name="Zeniou-Meyer M."/>
            <person name="Zivanovic Y."/>
            <person name="Bolotin-Fukuhara M."/>
            <person name="Thierry A."/>
            <person name="Bouchier C."/>
            <person name="Caudron B."/>
            <person name="Scarpelli C."/>
            <person name="Gaillardin C."/>
            <person name="Weissenbach J."/>
            <person name="Wincker P."/>
            <person name="Souciet J.-L."/>
        </authorList>
    </citation>
    <scope>NUCLEOTIDE SEQUENCE [LARGE SCALE GENOMIC DNA]</scope>
    <source>
        <strain>CLIB 122 / E 150</strain>
    </source>
</reference>
<protein>
    <recommendedName>
        <fullName evidence="5">CCR4-Not complex 3'-5'-exoribonuclease subunit Ccr4</fullName>
        <ecNumber>3.1.13.4</ecNumber>
    </recommendedName>
    <alternativeName>
        <fullName>Carbon catabolite repressor protein 4</fullName>
    </alternativeName>
    <alternativeName>
        <fullName>Cytoplasmic deadenylase</fullName>
    </alternativeName>
    <alternativeName>
        <fullName>Glucose-repressible alcohol dehydrogenase transcriptional effector</fullName>
    </alternativeName>
</protein>
<dbReference type="EC" id="3.1.13.4"/>
<dbReference type="EMBL" id="CR382128">
    <property type="protein sequence ID" value="CAG83167.1"/>
    <property type="molecule type" value="Genomic_DNA"/>
</dbReference>
<dbReference type="RefSeq" id="XP_500917.1">
    <property type="nucleotide sequence ID" value="XM_500917.1"/>
</dbReference>
<dbReference type="SMR" id="Q6CEJ6"/>
<dbReference type="FunCoup" id="Q6CEJ6">
    <property type="interactions" value="474"/>
</dbReference>
<dbReference type="STRING" id="284591.Q6CEJ6"/>
<dbReference type="EnsemblFungi" id="CAG83167">
    <property type="protein sequence ID" value="CAG83167"/>
    <property type="gene ID" value="YALI0_B15147g"/>
</dbReference>
<dbReference type="KEGG" id="yli:2907333"/>
<dbReference type="VEuPathDB" id="FungiDB:YALI0_B15147g"/>
<dbReference type="HOGENOM" id="CLU_016428_4_0_1"/>
<dbReference type="InParanoid" id="Q6CEJ6"/>
<dbReference type="OMA" id="PHYYARA"/>
<dbReference type="OrthoDB" id="112832at4891"/>
<dbReference type="Proteomes" id="UP000001300">
    <property type="component" value="Chromosome B"/>
</dbReference>
<dbReference type="GO" id="GO:0030015">
    <property type="term" value="C:CCR4-NOT core complex"/>
    <property type="evidence" value="ECO:0007669"/>
    <property type="project" value="EnsemblFungi"/>
</dbReference>
<dbReference type="GO" id="GO:0016593">
    <property type="term" value="C:Cdc73/Paf1 complex"/>
    <property type="evidence" value="ECO:0007669"/>
    <property type="project" value="EnsemblFungi"/>
</dbReference>
<dbReference type="GO" id="GO:0000932">
    <property type="term" value="C:P-body"/>
    <property type="evidence" value="ECO:0007669"/>
    <property type="project" value="EnsemblFungi"/>
</dbReference>
<dbReference type="GO" id="GO:0000175">
    <property type="term" value="F:3'-5'-RNA exonuclease activity"/>
    <property type="evidence" value="ECO:0000318"/>
    <property type="project" value="GO_Central"/>
</dbReference>
<dbReference type="GO" id="GO:0046872">
    <property type="term" value="F:metal ion binding"/>
    <property type="evidence" value="ECO:0007669"/>
    <property type="project" value="UniProtKB-KW"/>
</dbReference>
<dbReference type="GO" id="GO:0004535">
    <property type="term" value="F:poly(A)-specific ribonuclease activity"/>
    <property type="evidence" value="ECO:0007669"/>
    <property type="project" value="UniProtKB-EC"/>
</dbReference>
<dbReference type="GO" id="GO:0003723">
    <property type="term" value="F:RNA binding"/>
    <property type="evidence" value="ECO:0007669"/>
    <property type="project" value="UniProtKB-KW"/>
</dbReference>
<dbReference type="GO" id="GO:0006260">
    <property type="term" value="P:DNA replication"/>
    <property type="evidence" value="ECO:0007669"/>
    <property type="project" value="EnsemblFungi"/>
</dbReference>
<dbReference type="GO" id="GO:0000076">
    <property type="term" value="P:DNA replication checkpoint signaling"/>
    <property type="evidence" value="ECO:0007669"/>
    <property type="project" value="EnsemblFungi"/>
</dbReference>
<dbReference type="GO" id="GO:0000289">
    <property type="term" value="P:nuclear-transcribed mRNA poly(A) tail shortening"/>
    <property type="evidence" value="ECO:0007669"/>
    <property type="project" value="EnsemblFungi"/>
</dbReference>
<dbReference type="GO" id="GO:0032968">
    <property type="term" value="P:positive regulation of transcription elongation by RNA polymerase II"/>
    <property type="evidence" value="ECO:0007669"/>
    <property type="project" value="EnsemblFungi"/>
</dbReference>
<dbReference type="GO" id="GO:0006368">
    <property type="term" value="P:transcription elongation by RNA polymerase II"/>
    <property type="evidence" value="ECO:0007669"/>
    <property type="project" value="EnsemblFungi"/>
</dbReference>
<dbReference type="GO" id="GO:0007089">
    <property type="term" value="P:traversing start control point of mitotic cell cycle"/>
    <property type="evidence" value="ECO:0007669"/>
    <property type="project" value="EnsemblFungi"/>
</dbReference>
<dbReference type="CDD" id="cd09097">
    <property type="entry name" value="Deadenylase_CCR4"/>
    <property type="match status" value="1"/>
</dbReference>
<dbReference type="Gene3D" id="3.60.10.10">
    <property type="entry name" value="Endonuclease/exonuclease/phosphatase"/>
    <property type="match status" value="1"/>
</dbReference>
<dbReference type="Gene3D" id="3.80.10.10">
    <property type="entry name" value="Ribonuclease Inhibitor"/>
    <property type="match status" value="1"/>
</dbReference>
<dbReference type="InterPro" id="IPR050410">
    <property type="entry name" value="CCR4/nocturin_mRNA_transcr"/>
</dbReference>
<dbReference type="InterPro" id="IPR036691">
    <property type="entry name" value="Endo/exonu/phosph_ase_sf"/>
</dbReference>
<dbReference type="InterPro" id="IPR005135">
    <property type="entry name" value="Endo/exonuclease/phosphatase"/>
</dbReference>
<dbReference type="InterPro" id="IPR001611">
    <property type="entry name" value="Leu-rich_rpt"/>
</dbReference>
<dbReference type="InterPro" id="IPR003591">
    <property type="entry name" value="Leu-rich_rpt_typical-subtyp"/>
</dbReference>
<dbReference type="InterPro" id="IPR032675">
    <property type="entry name" value="LRR_dom_sf"/>
</dbReference>
<dbReference type="PANTHER" id="PTHR12121">
    <property type="entry name" value="CARBON CATABOLITE REPRESSOR PROTEIN 4"/>
    <property type="match status" value="1"/>
</dbReference>
<dbReference type="PANTHER" id="PTHR12121:SF100">
    <property type="entry name" value="POLY(A)-SPECIFIC RIBONUCLEASE"/>
    <property type="match status" value="1"/>
</dbReference>
<dbReference type="Pfam" id="PF03372">
    <property type="entry name" value="Exo_endo_phos"/>
    <property type="match status" value="1"/>
</dbReference>
<dbReference type="Pfam" id="PF00560">
    <property type="entry name" value="LRR_1"/>
    <property type="match status" value="1"/>
</dbReference>
<dbReference type="SMART" id="SM00369">
    <property type="entry name" value="LRR_TYP"/>
    <property type="match status" value="3"/>
</dbReference>
<dbReference type="SUPFAM" id="SSF56219">
    <property type="entry name" value="DNase I-like"/>
    <property type="match status" value="1"/>
</dbReference>
<dbReference type="SUPFAM" id="SSF52058">
    <property type="entry name" value="L domain-like"/>
    <property type="match status" value="1"/>
</dbReference>
<dbReference type="PROSITE" id="PS51450">
    <property type="entry name" value="LRR"/>
    <property type="match status" value="3"/>
</dbReference>
<name>CCR4_YARLI</name>